<accession>Q47CM9</accession>
<keyword id="KW-0030">Aminoacyl-tRNA synthetase</keyword>
<keyword id="KW-0067">ATP-binding</keyword>
<keyword id="KW-0963">Cytoplasm</keyword>
<keyword id="KW-0436">Ligase</keyword>
<keyword id="KW-0460">Magnesium</keyword>
<keyword id="KW-0479">Metal-binding</keyword>
<keyword id="KW-0547">Nucleotide-binding</keyword>
<keyword id="KW-0648">Protein biosynthesis</keyword>
<keyword id="KW-0694">RNA-binding</keyword>
<keyword id="KW-0820">tRNA-binding</keyword>
<feature type="chain" id="PRO_0000232057" description="Phenylalanine--tRNA ligase beta subunit">
    <location>
        <begin position="1"/>
        <end position="794"/>
    </location>
</feature>
<feature type="domain" description="tRNA-binding" evidence="1">
    <location>
        <begin position="39"/>
        <end position="148"/>
    </location>
</feature>
<feature type="domain" description="B5" evidence="1">
    <location>
        <begin position="399"/>
        <end position="474"/>
    </location>
</feature>
<feature type="domain" description="FDX-ACB" evidence="1">
    <location>
        <begin position="700"/>
        <end position="793"/>
    </location>
</feature>
<feature type="binding site" evidence="1">
    <location>
        <position position="452"/>
    </location>
    <ligand>
        <name>Mg(2+)</name>
        <dbReference type="ChEBI" id="CHEBI:18420"/>
        <note>shared with alpha subunit</note>
    </ligand>
</feature>
<feature type="binding site" evidence="1">
    <location>
        <position position="458"/>
    </location>
    <ligand>
        <name>Mg(2+)</name>
        <dbReference type="ChEBI" id="CHEBI:18420"/>
        <note>shared with alpha subunit</note>
    </ligand>
</feature>
<feature type="binding site" evidence="1">
    <location>
        <position position="461"/>
    </location>
    <ligand>
        <name>Mg(2+)</name>
        <dbReference type="ChEBI" id="CHEBI:18420"/>
        <note>shared with alpha subunit</note>
    </ligand>
</feature>
<feature type="binding site" evidence="1">
    <location>
        <position position="462"/>
    </location>
    <ligand>
        <name>Mg(2+)</name>
        <dbReference type="ChEBI" id="CHEBI:18420"/>
        <note>shared with alpha subunit</note>
    </ligand>
</feature>
<organism>
    <name type="scientific">Dechloromonas aromatica (strain RCB)</name>
    <dbReference type="NCBI Taxonomy" id="159087"/>
    <lineage>
        <taxon>Bacteria</taxon>
        <taxon>Pseudomonadati</taxon>
        <taxon>Pseudomonadota</taxon>
        <taxon>Betaproteobacteria</taxon>
        <taxon>Rhodocyclales</taxon>
        <taxon>Azonexaceae</taxon>
        <taxon>Dechloromonas</taxon>
    </lineage>
</organism>
<evidence type="ECO:0000255" key="1">
    <source>
        <dbReference type="HAMAP-Rule" id="MF_00283"/>
    </source>
</evidence>
<comment type="catalytic activity">
    <reaction evidence="1">
        <text>tRNA(Phe) + L-phenylalanine + ATP = L-phenylalanyl-tRNA(Phe) + AMP + diphosphate + H(+)</text>
        <dbReference type="Rhea" id="RHEA:19413"/>
        <dbReference type="Rhea" id="RHEA-COMP:9668"/>
        <dbReference type="Rhea" id="RHEA-COMP:9699"/>
        <dbReference type="ChEBI" id="CHEBI:15378"/>
        <dbReference type="ChEBI" id="CHEBI:30616"/>
        <dbReference type="ChEBI" id="CHEBI:33019"/>
        <dbReference type="ChEBI" id="CHEBI:58095"/>
        <dbReference type="ChEBI" id="CHEBI:78442"/>
        <dbReference type="ChEBI" id="CHEBI:78531"/>
        <dbReference type="ChEBI" id="CHEBI:456215"/>
        <dbReference type="EC" id="6.1.1.20"/>
    </reaction>
</comment>
<comment type="cofactor">
    <cofactor evidence="1">
        <name>Mg(2+)</name>
        <dbReference type="ChEBI" id="CHEBI:18420"/>
    </cofactor>
    <text evidence="1">Binds 2 magnesium ions per tetramer.</text>
</comment>
<comment type="subunit">
    <text evidence="1">Tetramer of two alpha and two beta subunits.</text>
</comment>
<comment type="subcellular location">
    <subcellularLocation>
        <location evidence="1">Cytoplasm</location>
    </subcellularLocation>
</comment>
<comment type="similarity">
    <text evidence="1">Belongs to the phenylalanyl-tRNA synthetase beta subunit family. Type 1 subfamily.</text>
</comment>
<dbReference type="EC" id="6.1.1.20" evidence="1"/>
<dbReference type="EMBL" id="CP000089">
    <property type="protein sequence ID" value="AAZ47402.1"/>
    <property type="molecule type" value="Genomic_DNA"/>
</dbReference>
<dbReference type="SMR" id="Q47CM9"/>
<dbReference type="STRING" id="159087.Daro_2672"/>
<dbReference type="KEGG" id="dar:Daro_2672"/>
<dbReference type="eggNOG" id="COG0072">
    <property type="taxonomic scope" value="Bacteria"/>
</dbReference>
<dbReference type="eggNOG" id="COG0073">
    <property type="taxonomic scope" value="Bacteria"/>
</dbReference>
<dbReference type="HOGENOM" id="CLU_016891_0_0_4"/>
<dbReference type="OrthoDB" id="9805455at2"/>
<dbReference type="GO" id="GO:0009328">
    <property type="term" value="C:phenylalanine-tRNA ligase complex"/>
    <property type="evidence" value="ECO:0007669"/>
    <property type="project" value="TreeGrafter"/>
</dbReference>
<dbReference type="GO" id="GO:0005524">
    <property type="term" value="F:ATP binding"/>
    <property type="evidence" value="ECO:0007669"/>
    <property type="project" value="UniProtKB-UniRule"/>
</dbReference>
<dbReference type="GO" id="GO:0000287">
    <property type="term" value="F:magnesium ion binding"/>
    <property type="evidence" value="ECO:0007669"/>
    <property type="project" value="UniProtKB-UniRule"/>
</dbReference>
<dbReference type="GO" id="GO:0004826">
    <property type="term" value="F:phenylalanine-tRNA ligase activity"/>
    <property type="evidence" value="ECO:0007669"/>
    <property type="project" value="UniProtKB-UniRule"/>
</dbReference>
<dbReference type="GO" id="GO:0000049">
    <property type="term" value="F:tRNA binding"/>
    <property type="evidence" value="ECO:0007669"/>
    <property type="project" value="UniProtKB-KW"/>
</dbReference>
<dbReference type="GO" id="GO:0006432">
    <property type="term" value="P:phenylalanyl-tRNA aminoacylation"/>
    <property type="evidence" value="ECO:0007669"/>
    <property type="project" value="UniProtKB-UniRule"/>
</dbReference>
<dbReference type="CDD" id="cd00769">
    <property type="entry name" value="PheRS_beta_core"/>
    <property type="match status" value="1"/>
</dbReference>
<dbReference type="CDD" id="cd02796">
    <property type="entry name" value="tRNA_bind_bactPheRS"/>
    <property type="match status" value="1"/>
</dbReference>
<dbReference type="FunFam" id="2.40.50.140:FF:000045">
    <property type="entry name" value="Phenylalanine--tRNA ligase beta subunit"/>
    <property type="match status" value="1"/>
</dbReference>
<dbReference type="FunFam" id="3.30.56.10:FF:000002">
    <property type="entry name" value="Phenylalanine--tRNA ligase beta subunit"/>
    <property type="match status" value="1"/>
</dbReference>
<dbReference type="FunFam" id="3.30.70.380:FF:000001">
    <property type="entry name" value="Phenylalanine--tRNA ligase beta subunit"/>
    <property type="match status" value="1"/>
</dbReference>
<dbReference type="FunFam" id="3.30.930.10:FF:000022">
    <property type="entry name" value="Phenylalanine--tRNA ligase beta subunit"/>
    <property type="match status" value="1"/>
</dbReference>
<dbReference type="FunFam" id="3.50.40.10:FF:000001">
    <property type="entry name" value="Phenylalanine--tRNA ligase beta subunit"/>
    <property type="match status" value="1"/>
</dbReference>
<dbReference type="Gene3D" id="3.30.56.10">
    <property type="match status" value="2"/>
</dbReference>
<dbReference type="Gene3D" id="3.30.930.10">
    <property type="entry name" value="Bira Bifunctional Protein, Domain 2"/>
    <property type="match status" value="1"/>
</dbReference>
<dbReference type="Gene3D" id="3.30.70.380">
    <property type="entry name" value="Ferrodoxin-fold anticodon-binding domain"/>
    <property type="match status" value="1"/>
</dbReference>
<dbReference type="Gene3D" id="2.40.50.140">
    <property type="entry name" value="Nucleic acid-binding proteins"/>
    <property type="match status" value="1"/>
</dbReference>
<dbReference type="Gene3D" id="3.50.40.10">
    <property type="entry name" value="Phenylalanyl-trna Synthetase, Chain B, domain 3"/>
    <property type="match status" value="1"/>
</dbReference>
<dbReference type="HAMAP" id="MF_00283">
    <property type="entry name" value="Phe_tRNA_synth_beta1"/>
    <property type="match status" value="1"/>
</dbReference>
<dbReference type="InterPro" id="IPR045864">
    <property type="entry name" value="aa-tRNA-synth_II/BPL/LPL"/>
</dbReference>
<dbReference type="InterPro" id="IPR005146">
    <property type="entry name" value="B3/B4_tRNA-bd"/>
</dbReference>
<dbReference type="InterPro" id="IPR009061">
    <property type="entry name" value="DNA-bd_dom_put_sf"/>
</dbReference>
<dbReference type="InterPro" id="IPR005121">
    <property type="entry name" value="Fdx_antiC-bd"/>
</dbReference>
<dbReference type="InterPro" id="IPR036690">
    <property type="entry name" value="Fdx_antiC-bd_sf"/>
</dbReference>
<dbReference type="InterPro" id="IPR012340">
    <property type="entry name" value="NA-bd_OB-fold"/>
</dbReference>
<dbReference type="InterPro" id="IPR045060">
    <property type="entry name" value="Phe-tRNA-ligase_IIc_bsu"/>
</dbReference>
<dbReference type="InterPro" id="IPR004532">
    <property type="entry name" value="Phe-tRNA-ligase_IIc_bsu_bact"/>
</dbReference>
<dbReference type="InterPro" id="IPR020825">
    <property type="entry name" value="Phe-tRNA_synthase-like_B3/B4"/>
</dbReference>
<dbReference type="InterPro" id="IPR041616">
    <property type="entry name" value="PheRS_beta_core"/>
</dbReference>
<dbReference type="InterPro" id="IPR002547">
    <property type="entry name" value="tRNA-bd_dom"/>
</dbReference>
<dbReference type="InterPro" id="IPR033714">
    <property type="entry name" value="tRNA_bind_bactPheRS"/>
</dbReference>
<dbReference type="InterPro" id="IPR005147">
    <property type="entry name" value="tRNA_synthase_B5-dom"/>
</dbReference>
<dbReference type="NCBIfam" id="TIGR00472">
    <property type="entry name" value="pheT_bact"/>
    <property type="match status" value="1"/>
</dbReference>
<dbReference type="NCBIfam" id="NF045760">
    <property type="entry name" value="YtpR"/>
    <property type="match status" value="1"/>
</dbReference>
<dbReference type="PANTHER" id="PTHR10947:SF0">
    <property type="entry name" value="PHENYLALANINE--TRNA LIGASE BETA SUBUNIT"/>
    <property type="match status" value="1"/>
</dbReference>
<dbReference type="PANTHER" id="PTHR10947">
    <property type="entry name" value="PHENYLALANYL-TRNA SYNTHETASE BETA CHAIN AND LEUCINE-RICH REPEAT-CONTAINING PROTEIN 47"/>
    <property type="match status" value="1"/>
</dbReference>
<dbReference type="Pfam" id="PF03483">
    <property type="entry name" value="B3_4"/>
    <property type="match status" value="1"/>
</dbReference>
<dbReference type="Pfam" id="PF03484">
    <property type="entry name" value="B5"/>
    <property type="match status" value="1"/>
</dbReference>
<dbReference type="Pfam" id="PF03147">
    <property type="entry name" value="FDX-ACB"/>
    <property type="match status" value="1"/>
</dbReference>
<dbReference type="Pfam" id="PF01588">
    <property type="entry name" value="tRNA_bind"/>
    <property type="match status" value="1"/>
</dbReference>
<dbReference type="Pfam" id="PF17759">
    <property type="entry name" value="tRNA_synthFbeta"/>
    <property type="match status" value="1"/>
</dbReference>
<dbReference type="SMART" id="SM00873">
    <property type="entry name" value="B3_4"/>
    <property type="match status" value="1"/>
</dbReference>
<dbReference type="SMART" id="SM00874">
    <property type="entry name" value="B5"/>
    <property type="match status" value="1"/>
</dbReference>
<dbReference type="SMART" id="SM00896">
    <property type="entry name" value="FDX-ACB"/>
    <property type="match status" value="1"/>
</dbReference>
<dbReference type="SUPFAM" id="SSF54991">
    <property type="entry name" value="Anticodon-binding domain of PheRS"/>
    <property type="match status" value="1"/>
</dbReference>
<dbReference type="SUPFAM" id="SSF55681">
    <property type="entry name" value="Class II aaRS and biotin synthetases"/>
    <property type="match status" value="1"/>
</dbReference>
<dbReference type="SUPFAM" id="SSF50249">
    <property type="entry name" value="Nucleic acid-binding proteins"/>
    <property type="match status" value="1"/>
</dbReference>
<dbReference type="SUPFAM" id="SSF56037">
    <property type="entry name" value="PheT/TilS domain"/>
    <property type="match status" value="1"/>
</dbReference>
<dbReference type="SUPFAM" id="SSF46955">
    <property type="entry name" value="Putative DNA-binding domain"/>
    <property type="match status" value="1"/>
</dbReference>
<dbReference type="PROSITE" id="PS51483">
    <property type="entry name" value="B5"/>
    <property type="match status" value="1"/>
</dbReference>
<dbReference type="PROSITE" id="PS51447">
    <property type="entry name" value="FDX_ACB"/>
    <property type="match status" value="1"/>
</dbReference>
<dbReference type="PROSITE" id="PS50886">
    <property type="entry name" value="TRBD"/>
    <property type="match status" value="1"/>
</dbReference>
<reference key="1">
    <citation type="journal article" date="2009" name="BMC Genomics">
        <title>Metabolic analysis of the soil microbe Dechloromonas aromatica str. RCB: indications of a surprisingly complex life-style and cryptic anaerobic pathways for aromatic degradation.</title>
        <authorList>
            <person name="Salinero K.K."/>
            <person name="Keller K."/>
            <person name="Feil W.S."/>
            <person name="Feil H."/>
            <person name="Trong S."/>
            <person name="Di Bartolo G."/>
            <person name="Lapidus A."/>
        </authorList>
    </citation>
    <scope>NUCLEOTIDE SEQUENCE [LARGE SCALE GENOMIC DNA]</scope>
    <source>
        <strain>RCB</strain>
    </source>
</reference>
<sequence>MKFSESWLRTLVDPKLSSEELSHLLTMAGLEVEELDPVAPAFDNVVVAHVLDVVKHPDADRLNVCQVDTGSGAPTTIVCGAPNVAVGLKVPCALPGAKLPGDFTIKIAKVRGIESSGMLCSAKELGIAEEASGLLVLPSDAPVGQAIRQYLDLDDNLFELKLTPNRADCLSLLGIAREVGAITGAATSLPVVPEVVASIADSRAVVLDAPEACPLYCGRVLKGVNAKAPTPEWMKRRLERSGIRAISALVDVTNYVMLELGQPLHAFDNTRLEGAVHARLAKPEEKLLLLNEQTIAVDADVLVIADDVKPLAMAGIMGGEESGITLETSELFLESAFFAPKAIAGRARRYGFGSDASHRFERGVDFGGARRAIERATQLILEICGGQAGPVVEAKAVLPVRKPVLLRTARAEMVLGLPLGAERIAGLFAGLDLSFVCEGDNFQVTPPSWRFDMEVEEDLIEEIARLYGYDNIPSVSPRGALKMQVQPEARRPAYRLRQMLADRGYQEVVNFAFVEAAWEADFAENVAEAELIRLANPIASQMAVMRSTLFGGLISNLITNLKRKQTRVRLFEVGRTFHRAADAVPVNGFHQPWKLAGLAFGGALPEGWGSGARKVDFYDVKGDIEALLAPAVLRFEKLAHPALHPGRAARILFDGRDIGCIGEVHPEWVQKYDLPQAPVVFELDFDAVKAANVPAYAEVSKFPPVIRDLAIVVDQNVVLQTLLDGLKGQVSDLIQDIQLFDVYVGKGVPENKKSLAFRIVMQDTQRTLQDSEVDAAMQQLVSCFEQAFGAQLRA</sequence>
<gene>
    <name evidence="1" type="primary">pheT</name>
    <name type="ordered locus">Daro_2672</name>
</gene>
<proteinExistence type="inferred from homology"/>
<name>SYFB_DECAR</name>
<protein>
    <recommendedName>
        <fullName evidence="1">Phenylalanine--tRNA ligase beta subunit</fullName>
        <ecNumber evidence="1">6.1.1.20</ecNumber>
    </recommendedName>
    <alternativeName>
        <fullName evidence="1">Phenylalanyl-tRNA synthetase beta subunit</fullName>
        <shortName evidence="1">PheRS</shortName>
    </alternativeName>
</protein>